<reference key="1">
    <citation type="journal article" date="2009" name="J. Bacteriol.">
        <title>Complete genome sequence of Erythrobacter litoralis HTCC2594.</title>
        <authorList>
            <person name="Oh H.M."/>
            <person name="Giovannoni S.J."/>
            <person name="Ferriera S."/>
            <person name="Johnson J."/>
            <person name="Cho J.C."/>
        </authorList>
    </citation>
    <scope>NUCLEOTIDE SEQUENCE [LARGE SCALE GENOMIC DNA]</scope>
    <source>
        <strain>HTCC2594</strain>
    </source>
</reference>
<dbReference type="EC" id="3.6.1.27" evidence="1"/>
<dbReference type="EMBL" id="CP000157">
    <property type="protein sequence ID" value="ABC64505.1"/>
    <property type="molecule type" value="Genomic_DNA"/>
</dbReference>
<dbReference type="RefSeq" id="WP_011415327.1">
    <property type="nucleotide sequence ID" value="NC_007722.1"/>
</dbReference>
<dbReference type="SMR" id="Q2N736"/>
<dbReference type="STRING" id="314225.ELI_12065"/>
<dbReference type="KEGG" id="eli:ELI_12065"/>
<dbReference type="eggNOG" id="COG1968">
    <property type="taxonomic scope" value="Bacteria"/>
</dbReference>
<dbReference type="HOGENOM" id="CLU_060296_1_0_5"/>
<dbReference type="OrthoDB" id="9808289at2"/>
<dbReference type="Proteomes" id="UP000008808">
    <property type="component" value="Chromosome"/>
</dbReference>
<dbReference type="GO" id="GO:0005886">
    <property type="term" value="C:plasma membrane"/>
    <property type="evidence" value="ECO:0007669"/>
    <property type="project" value="UniProtKB-SubCell"/>
</dbReference>
<dbReference type="GO" id="GO:0050380">
    <property type="term" value="F:undecaprenyl-diphosphatase activity"/>
    <property type="evidence" value="ECO:0007669"/>
    <property type="project" value="UniProtKB-UniRule"/>
</dbReference>
<dbReference type="GO" id="GO:0071555">
    <property type="term" value="P:cell wall organization"/>
    <property type="evidence" value="ECO:0007669"/>
    <property type="project" value="UniProtKB-KW"/>
</dbReference>
<dbReference type="GO" id="GO:0009252">
    <property type="term" value="P:peptidoglycan biosynthetic process"/>
    <property type="evidence" value="ECO:0007669"/>
    <property type="project" value="UniProtKB-KW"/>
</dbReference>
<dbReference type="GO" id="GO:0008360">
    <property type="term" value="P:regulation of cell shape"/>
    <property type="evidence" value="ECO:0007669"/>
    <property type="project" value="UniProtKB-KW"/>
</dbReference>
<dbReference type="GO" id="GO:0046677">
    <property type="term" value="P:response to antibiotic"/>
    <property type="evidence" value="ECO:0007669"/>
    <property type="project" value="UniProtKB-UniRule"/>
</dbReference>
<dbReference type="HAMAP" id="MF_01006">
    <property type="entry name" value="Undec_diphosphatase"/>
    <property type="match status" value="1"/>
</dbReference>
<dbReference type="InterPro" id="IPR003824">
    <property type="entry name" value="UppP"/>
</dbReference>
<dbReference type="PANTHER" id="PTHR30622">
    <property type="entry name" value="UNDECAPRENYL-DIPHOSPHATASE"/>
    <property type="match status" value="1"/>
</dbReference>
<dbReference type="PANTHER" id="PTHR30622:SF4">
    <property type="entry name" value="UNDECAPRENYL-DIPHOSPHATASE"/>
    <property type="match status" value="1"/>
</dbReference>
<dbReference type="Pfam" id="PF02673">
    <property type="entry name" value="BacA"/>
    <property type="match status" value="1"/>
</dbReference>
<name>UPPP_ERYLH</name>
<protein>
    <recommendedName>
        <fullName evidence="1">Undecaprenyl-diphosphatase</fullName>
        <ecNumber evidence="1">3.6.1.27</ecNumber>
    </recommendedName>
    <alternativeName>
        <fullName evidence="1">Bacitracin resistance protein</fullName>
    </alternativeName>
    <alternativeName>
        <fullName evidence="1">Undecaprenyl pyrophosphate phosphatase</fullName>
    </alternativeName>
</protein>
<evidence type="ECO:0000255" key="1">
    <source>
        <dbReference type="HAMAP-Rule" id="MF_01006"/>
    </source>
</evidence>
<sequence>MTFLQLLIIAVVQGITEFLPISSSGHLILIPNFTEFPDQGPLIDVAVHVGSLLAIIVYFFKDVLTLARGGFASIGIGTDRPDAPSERRLFWWIVLGTIPAVAFGLAIKLGAFNSIAETWFNITVIDDDLMSSIRFTDLIAFNLIVYGIALGLADWLGKEVKKFEDMSWRDGLIVGIAQALAIIPGTSRSGVTMTAARALGYSRYESARFSFLLSIPAVAGAGVLIVPEIFEAGATLAMDALIAGVLTFIAAFLTMAFLMNFLKRASMLVFVFYRVAMGCALLAFF</sequence>
<organism>
    <name type="scientific">Erythrobacter litoralis (strain HTCC2594)</name>
    <dbReference type="NCBI Taxonomy" id="314225"/>
    <lineage>
        <taxon>Bacteria</taxon>
        <taxon>Pseudomonadati</taxon>
        <taxon>Pseudomonadota</taxon>
        <taxon>Alphaproteobacteria</taxon>
        <taxon>Sphingomonadales</taxon>
        <taxon>Erythrobacteraceae</taxon>
        <taxon>Erythrobacter/Porphyrobacter group</taxon>
        <taxon>Erythrobacter</taxon>
    </lineage>
</organism>
<gene>
    <name evidence="1" type="primary">uppP</name>
    <name type="ordered locus">ELI_12065</name>
</gene>
<feature type="chain" id="PRO_0000290706" description="Undecaprenyl-diphosphatase">
    <location>
        <begin position="1"/>
        <end position="285"/>
    </location>
</feature>
<feature type="transmembrane region" description="Helical" evidence="1">
    <location>
        <begin position="40"/>
        <end position="60"/>
    </location>
</feature>
<feature type="transmembrane region" description="Helical" evidence="1">
    <location>
        <begin position="89"/>
        <end position="109"/>
    </location>
</feature>
<feature type="transmembrane region" description="Helical" evidence="1">
    <location>
        <begin position="137"/>
        <end position="157"/>
    </location>
</feature>
<feature type="transmembrane region" description="Helical" evidence="1">
    <location>
        <begin position="171"/>
        <end position="191"/>
    </location>
</feature>
<feature type="transmembrane region" description="Helical" evidence="1">
    <location>
        <begin position="209"/>
        <end position="229"/>
    </location>
</feature>
<feature type="transmembrane region" description="Helical" evidence="1">
    <location>
        <begin position="241"/>
        <end position="261"/>
    </location>
</feature>
<feature type="transmembrane region" description="Helical" evidence="1">
    <location>
        <begin position="265"/>
        <end position="285"/>
    </location>
</feature>
<keyword id="KW-0046">Antibiotic resistance</keyword>
<keyword id="KW-0997">Cell inner membrane</keyword>
<keyword id="KW-1003">Cell membrane</keyword>
<keyword id="KW-0133">Cell shape</keyword>
<keyword id="KW-0961">Cell wall biogenesis/degradation</keyword>
<keyword id="KW-0378">Hydrolase</keyword>
<keyword id="KW-0472">Membrane</keyword>
<keyword id="KW-0573">Peptidoglycan synthesis</keyword>
<keyword id="KW-1185">Reference proteome</keyword>
<keyword id="KW-0812">Transmembrane</keyword>
<keyword id="KW-1133">Transmembrane helix</keyword>
<proteinExistence type="inferred from homology"/>
<comment type="function">
    <text evidence="1">Catalyzes the dephosphorylation of undecaprenyl diphosphate (UPP). Confers resistance to bacitracin.</text>
</comment>
<comment type="catalytic activity">
    <reaction evidence="1">
        <text>di-trans,octa-cis-undecaprenyl diphosphate + H2O = di-trans,octa-cis-undecaprenyl phosphate + phosphate + H(+)</text>
        <dbReference type="Rhea" id="RHEA:28094"/>
        <dbReference type="ChEBI" id="CHEBI:15377"/>
        <dbReference type="ChEBI" id="CHEBI:15378"/>
        <dbReference type="ChEBI" id="CHEBI:43474"/>
        <dbReference type="ChEBI" id="CHEBI:58405"/>
        <dbReference type="ChEBI" id="CHEBI:60392"/>
        <dbReference type="EC" id="3.6.1.27"/>
    </reaction>
</comment>
<comment type="subcellular location">
    <subcellularLocation>
        <location evidence="1">Cell inner membrane</location>
        <topology evidence="1">Multi-pass membrane protein</topology>
    </subcellularLocation>
</comment>
<comment type="miscellaneous">
    <text>Bacitracin is thought to be involved in the inhibition of peptidoglycan synthesis by sequestering undecaprenyl diphosphate, thereby reducing the pool of lipid carrier available.</text>
</comment>
<comment type="similarity">
    <text evidence="1">Belongs to the UppP family.</text>
</comment>
<accession>Q2N736</accession>